<organism>
    <name type="scientific">Lachnoclostridium phytofermentans (strain ATCC 700394 / DSM 18823 / ISDg)</name>
    <name type="common">Clostridium phytofermentans</name>
    <dbReference type="NCBI Taxonomy" id="357809"/>
    <lineage>
        <taxon>Bacteria</taxon>
        <taxon>Bacillati</taxon>
        <taxon>Bacillota</taxon>
        <taxon>Clostridia</taxon>
        <taxon>Lachnospirales</taxon>
        <taxon>Lachnospiraceae</taxon>
    </lineage>
</organism>
<feature type="chain" id="PRO_1000081765" description="Small ribosomal subunit protein uS19">
    <location>
        <begin position="1"/>
        <end position="92"/>
    </location>
</feature>
<reference key="1">
    <citation type="submission" date="2007-11" db="EMBL/GenBank/DDBJ databases">
        <title>Complete genome sequence of Clostridium phytofermentans ISDg.</title>
        <authorList>
            <person name="Leschine S.B."/>
            <person name="Warnick T.A."/>
            <person name="Blanchard J.L."/>
            <person name="Schnell D.J."/>
            <person name="Petit E.L."/>
            <person name="LaTouf W.G."/>
            <person name="Copeland A."/>
            <person name="Lucas S."/>
            <person name="Lapidus A."/>
            <person name="Barry K."/>
            <person name="Glavina del Rio T."/>
            <person name="Dalin E."/>
            <person name="Tice H."/>
            <person name="Pitluck S."/>
            <person name="Kiss H."/>
            <person name="Brettin T."/>
            <person name="Bruce D."/>
            <person name="Detter J.C."/>
            <person name="Han C."/>
            <person name="Kuske C."/>
            <person name="Schmutz J."/>
            <person name="Larimer F."/>
            <person name="Land M."/>
            <person name="Hauser L."/>
            <person name="Kyrpides N."/>
            <person name="Kim E.A."/>
            <person name="Richardson P."/>
        </authorList>
    </citation>
    <scope>NUCLEOTIDE SEQUENCE [LARGE SCALE GENOMIC DNA]</scope>
    <source>
        <strain>ATCC 700394 / DSM 18823 / ISDg</strain>
    </source>
</reference>
<proteinExistence type="inferred from homology"/>
<name>RS19_LACP7</name>
<accession>A9KJJ0</accession>
<comment type="function">
    <text evidence="1">Protein S19 forms a complex with S13 that binds strongly to the 16S ribosomal RNA.</text>
</comment>
<comment type="similarity">
    <text evidence="1">Belongs to the universal ribosomal protein uS19 family.</text>
</comment>
<sequence>MARSLKKGPFADDHLLKKVDDLNKTGSKTVIKTWSRRSTIFPQMVSHTIAVHDGRRHVPVYVTEDMVGHKLGEFVATRTFRGHGKDEKKSRK</sequence>
<evidence type="ECO:0000255" key="1">
    <source>
        <dbReference type="HAMAP-Rule" id="MF_00531"/>
    </source>
</evidence>
<evidence type="ECO:0000305" key="2"/>
<keyword id="KW-1185">Reference proteome</keyword>
<keyword id="KW-0687">Ribonucleoprotein</keyword>
<keyword id="KW-0689">Ribosomal protein</keyword>
<keyword id="KW-0694">RNA-binding</keyword>
<keyword id="KW-0699">rRNA-binding</keyword>
<protein>
    <recommendedName>
        <fullName evidence="1">Small ribosomal subunit protein uS19</fullName>
    </recommendedName>
    <alternativeName>
        <fullName evidence="2">30S ribosomal protein S19</fullName>
    </alternativeName>
</protein>
<gene>
    <name evidence="1" type="primary">rpsS</name>
    <name type="ordered locus">Cphy_3663</name>
</gene>
<dbReference type="EMBL" id="CP000885">
    <property type="protein sequence ID" value="ABX44010.1"/>
    <property type="molecule type" value="Genomic_DNA"/>
</dbReference>
<dbReference type="RefSeq" id="WP_012201658.1">
    <property type="nucleotide sequence ID" value="NC_010001.1"/>
</dbReference>
<dbReference type="SMR" id="A9KJJ0"/>
<dbReference type="STRING" id="357809.Cphy_3663"/>
<dbReference type="KEGG" id="cpy:Cphy_3663"/>
<dbReference type="eggNOG" id="COG0185">
    <property type="taxonomic scope" value="Bacteria"/>
</dbReference>
<dbReference type="HOGENOM" id="CLU_144911_0_1_9"/>
<dbReference type="OrthoDB" id="9797833at2"/>
<dbReference type="Proteomes" id="UP000000370">
    <property type="component" value="Chromosome"/>
</dbReference>
<dbReference type="GO" id="GO:0005737">
    <property type="term" value="C:cytoplasm"/>
    <property type="evidence" value="ECO:0007669"/>
    <property type="project" value="UniProtKB-ARBA"/>
</dbReference>
<dbReference type="GO" id="GO:0015935">
    <property type="term" value="C:small ribosomal subunit"/>
    <property type="evidence" value="ECO:0007669"/>
    <property type="project" value="InterPro"/>
</dbReference>
<dbReference type="GO" id="GO:0019843">
    <property type="term" value="F:rRNA binding"/>
    <property type="evidence" value="ECO:0007669"/>
    <property type="project" value="UniProtKB-UniRule"/>
</dbReference>
<dbReference type="GO" id="GO:0003735">
    <property type="term" value="F:structural constituent of ribosome"/>
    <property type="evidence" value="ECO:0007669"/>
    <property type="project" value="InterPro"/>
</dbReference>
<dbReference type="GO" id="GO:0000028">
    <property type="term" value="P:ribosomal small subunit assembly"/>
    <property type="evidence" value="ECO:0007669"/>
    <property type="project" value="TreeGrafter"/>
</dbReference>
<dbReference type="GO" id="GO:0006412">
    <property type="term" value="P:translation"/>
    <property type="evidence" value="ECO:0007669"/>
    <property type="project" value="UniProtKB-UniRule"/>
</dbReference>
<dbReference type="FunFam" id="3.30.860.10:FF:000001">
    <property type="entry name" value="30S ribosomal protein S19"/>
    <property type="match status" value="1"/>
</dbReference>
<dbReference type="Gene3D" id="3.30.860.10">
    <property type="entry name" value="30s Ribosomal Protein S19, Chain A"/>
    <property type="match status" value="1"/>
</dbReference>
<dbReference type="HAMAP" id="MF_00531">
    <property type="entry name" value="Ribosomal_uS19"/>
    <property type="match status" value="1"/>
</dbReference>
<dbReference type="InterPro" id="IPR002222">
    <property type="entry name" value="Ribosomal_uS19"/>
</dbReference>
<dbReference type="InterPro" id="IPR005732">
    <property type="entry name" value="Ribosomal_uS19_bac-type"/>
</dbReference>
<dbReference type="InterPro" id="IPR020934">
    <property type="entry name" value="Ribosomal_uS19_CS"/>
</dbReference>
<dbReference type="InterPro" id="IPR023575">
    <property type="entry name" value="Ribosomal_uS19_SF"/>
</dbReference>
<dbReference type="NCBIfam" id="TIGR01050">
    <property type="entry name" value="rpsS_bact"/>
    <property type="match status" value="1"/>
</dbReference>
<dbReference type="PANTHER" id="PTHR11880">
    <property type="entry name" value="RIBOSOMAL PROTEIN S19P FAMILY MEMBER"/>
    <property type="match status" value="1"/>
</dbReference>
<dbReference type="PANTHER" id="PTHR11880:SF8">
    <property type="entry name" value="SMALL RIBOSOMAL SUBUNIT PROTEIN US19M"/>
    <property type="match status" value="1"/>
</dbReference>
<dbReference type="Pfam" id="PF00203">
    <property type="entry name" value="Ribosomal_S19"/>
    <property type="match status" value="1"/>
</dbReference>
<dbReference type="PIRSF" id="PIRSF002144">
    <property type="entry name" value="Ribosomal_S19"/>
    <property type="match status" value="1"/>
</dbReference>
<dbReference type="PRINTS" id="PR00975">
    <property type="entry name" value="RIBOSOMALS19"/>
</dbReference>
<dbReference type="SUPFAM" id="SSF54570">
    <property type="entry name" value="Ribosomal protein S19"/>
    <property type="match status" value="1"/>
</dbReference>
<dbReference type="PROSITE" id="PS00323">
    <property type="entry name" value="RIBOSOMAL_S19"/>
    <property type="match status" value="1"/>
</dbReference>